<dbReference type="EC" id="1.7.1.13" evidence="1"/>
<dbReference type="EMBL" id="CP000089">
    <property type="protein sequence ID" value="AAZ47082.1"/>
    <property type="molecule type" value="Genomic_DNA"/>
</dbReference>
<dbReference type="SMR" id="Q47DJ9"/>
<dbReference type="STRING" id="159087.Daro_2346"/>
<dbReference type="KEGG" id="dar:Daro_2346"/>
<dbReference type="eggNOG" id="COG0780">
    <property type="taxonomic scope" value="Bacteria"/>
</dbReference>
<dbReference type="eggNOG" id="COG2904">
    <property type="taxonomic scope" value="Bacteria"/>
</dbReference>
<dbReference type="HOGENOM" id="CLU_054738_0_0_4"/>
<dbReference type="OrthoDB" id="9789995at2"/>
<dbReference type="UniPathway" id="UPA00392"/>
<dbReference type="GO" id="GO:0005737">
    <property type="term" value="C:cytoplasm"/>
    <property type="evidence" value="ECO:0007669"/>
    <property type="project" value="UniProtKB-SubCell"/>
</dbReference>
<dbReference type="GO" id="GO:0033739">
    <property type="term" value="F:preQ1 synthase activity"/>
    <property type="evidence" value="ECO:0007669"/>
    <property type="project" value="UniProtKB-UniRule"/>
</dbReference>
<dbReference type="GO" id="GO:0008616">
    <property type="term" value="P:queuosine biosynthetic process"/>
    <property type="evidence" value="ECO:0007669"/>
    <property type="project" value="UniProtKB-UniRule"/>
</dbReference>
<dbReference type="GO" id="GO:0006400">
    <property type="term" value="P:tRNA modification"/>
    <property type="evidence" value="ECO:0007669"/>
    <property type="project" value="UniProtKB-UniRule"/>
</dbReference>
<dbReference type="Gene3D" id="3.30.1130.10">
    <property type="match status" value="2"/>
</dbReference>
<dbReference type="HAMAP" id="MF_00817">
    <property type="entry name" value="QueF_type2"/>
    <property type="match status" value="1"/>
</dbReference>
<dbReference type="InterPro" id="IPR043133">
    <property type="entry name" value="GTP-CH-I_C/QueF"/>
</dbReference>
<dbReference type="InterPro" id="IPR050084">
    <property type="entry name" value="NADPH_dep_7-cyano-7-deazaG_red"/>
</dbReference>
<dbReference type="InterPro" id="IPR029500">
    <property type="entry name" value="QueF"/>
</dbReference>
<dbReference type="InterPro" id="IPR029139">
    <property type="entry name" value="QueF_N"/>
</dbReference>
<dbReference type="InterPro" id="IPR016428">
    <property type="entry name" value="QueF_type2"/>
</dbReference>
<dbReference type="NCBIfam" id="TIGR03138">
    <property type="entry name" value="QueF"/>
    <property type="match status" value="1"/>
</dbReference>
<dbReference type="PANTHER" id="PTHR34354">
    <property type="entry name" value="NADPH-DEPENDENT 7-CYANO-7-DEAZAGUANINE REDUCTASE"/>
    <property type="match status" value="1"/>
</dbReference>
<dbReference type="PANTHER" id="PTHR34354:SF1">
    <property type="entry name" value="NADPH-DEPENDENT 7-CYANO-7-DEAZAGUANINE REDUCTASE"/>
    <property type="match status" value="1"/>
</dbReference>
<dbReference type="Pfam" id="PF14489">
    <property type="entry name" value="QueF"/>
    <property type="match status" value="1"/>
</dbReference>
<dbReference type="Pfam" id="PF14819">
    <property type="entry name" value="QueF_N"/>
    <property type="match status" value="1"/>
</dbReference>
<dbReference type="PIRSF" id="PIRSF004750">
    <property type="entry name" value="Nitrile_oxidored_YqcD_prd"/>
    <property type="match status" value="1"/>
</dbReference>
<dbReference type="SUPFAM" id="SSF55620">
    <property type="entry name" value="Tetrahydrobiopterin biosynthesis enzymes-like"/>
    <property type="match status" value="1"/>
</dbReference>
<sequence length="283" mass="31427">MTLTTTHIADPSHASPLGKATEYQSHYAPELLYPIPRQLKRSELGITDANLPFVGEDLWNAYELSWLNSKGKPVVAVGTFRVPANSPNLIESKSFKLYLNSFNQSSFDNIAAVSATMSRDLSAAAGSPIIVTLEPLSASPLASIGTPDGILLDELDITCDRYQPEPALLATLPGENVEETLYSHLLKSNCLVTGQPDWAMVVIRYRGKPIDRAGLLRYIVSFRNHNEFHEQCVERIFSDIRVRCQPEVLAVHARYTRRGGLDINPFRSTGDYAAPDNTREIRQ</sequence>
<proteinExistence type="inferred from homology"/>
<reference key="1">
    <citation type="journal article" date="2009" name="BMC Genomics">
        <title>Metabolic analysis of the soil microbe Dechloromonas aromatica str. RCB: indications of a surprisingly complex life-style and cryptic anaerobic pathways for aromatic degradation.</title>
        <authorList>
            <person name="Salinero K.K."/>
            <person name="Keller K."/>
            <person name="Feil W.S."/>
            <person name="Feil H."/>
            <person name="Trong S."/>
            <person name="Di Bartolo G."/>
            <person name="Lapidus A."/>
        </authorList>
    </citation>
    <scope>NUCLEOTIDE SEQUENCE [LARGE SCALE GENOMIC DNA]</scope>
    <source>
        <strain>RCB</strain>
    </source>
</reference>
<protein>
    <recommendedName>
        <fullName evidence="1">NADPH-dependent 7-cyano-7-deazaguanine reductase</fullName>
        <ecNumber evidence="1">1.7.1.13</ecNumber>
    </recommendedName>
    <alternativeName>
        <fullName evidence="1">7-cyano-7-carbaguanine reductase</fullName>
    </alternativeName>
    <alternativeName>
        <fullName evidence="1">NADPH-dependent nitrile oxidoreductase</fullName>
    </alternativeName>
    <alternativeName>
        <fullName evidence="1">PreQ(0) reductase</fullName>
    </alternativeName>
</protein>
<feature type="chain" id="PRO_0000247708" description="NADPH-dependent 7-cyano-7-deazaguanine reductase">
    <location>
        <begin position="1"/>
        <end position="283"/>
    </location>
</feature>
<feature type="active site" description="Thioimide intermediate" evidence="1">
    <location>
        <position position="190"/>
    </location>
</feature>
<feature type="active site" description="Proton donor" evidence="1">
    <location>
        <position position="197"/>
    </location>
</feature>
<feature type="binding site" evidence="1">
    <location>
        <begin position="90"/>
        <end position="92"/>
    </location>
    <ligand>
        <name>substrate</name>
    </ligand>
</feature>
<feature type="binding site" evidence="1">
    <location>
        <begin position="92"/>
        <end position="93"/>
    </location>
    <ligand>
        <name>NADPH</name>
        <dbReference type="ChEBI" id="CHEBI:57783"/>
    </ligand>
</feature>
<feature type="binding site" evidence="1">
    <location>
        <begin position="229"/>
        <end position="230"/>
    </location>
    <ligand>
        <name>substrate</name>
    </ligand>
</feature>
<feature type="binding site" evidence="1">
    <location>
        <begin position="258"/>
        <end position="259"/>
    </location>
    <ligand>
        <name>NADPH</name>
        <dbReference type="ChEBI" id="CHEBI:57783"/>
    </ligand>
</feature>
<accession>Q47DJ9</accession>
<gene>
    <name evidence="1" type="primary">queF</name>
    <name type="ordered locus">Daro_2346</name>
</gene>
<evidence type="ECO:0000255" key="1">
    <source>
        <dbReference type="HAMAP-Rule" id="MF_00817"/>
    </source>
</evidence>
<name>QUEF_DECAR</name>
<keyword id="KW-0963">Cytoplasm</keyword>
<keyword id="KW-0521">NADP</keyword>
<keyword id="KW-0560">Oxidoreductase</keyword>
<keyword id="KW-0671">Queuosine biosynthesis</keyword>
<organism>
    <name type="scientific">Dechloromonas aromatica (strain RCB)</name>
    <dbReference type="NCBI Taxonomy" id="159087"/>
    <lineage>
        <taxon>Bacteria</taxon>
        <taxon>Pseudomonadati</taxon>
        <taxon>Pseudomonadota</taxon>
        <taxon>Betaproteobacteria</taxon>
        <taxon>Rhodocyclales</taxon>
        <taxon>Azonexaceae</taxon>
        <taxon>Dechloromonas</taxon>
    </lineage>
</organism>
<comment type="function">
    <text evidence="1">Catalyzes the NADPH-dependent reduction of 7-cyano-7-deazaguanine (preQ0) to 7-aminomethyl-7-deazaguanine (preQ1).</text>
</comment>
<comment type="catalytic activity">
    <reaction evidence="1">
        <text>7-aminomethyl-7-carbaguanine + 2 NADP(+) = 7-cyano-7-deazaguanine + 2 NADPH + 3 H(+)</text>
        <dbReference type="Rhea" id="RHEA:13409"/>
        <dbReference type="ChEBI" id="CHEBI:15378"/>
        <dbReference type="ChEBI" id="CHEBI:45075"/>
        <dbReference type="ChEBI" id="CHEBI:57783"/>
        <dbReference type="ChEBI" id="CHEBI:58349"/>
        <dbReference type="ChEBI" id="CHEBI:58703"/>
        <dbReference type="EC" id="1.7.1.13"/>
    </reaction>
</comment>
<comment type="pathway">
    <text evidence="1">tRNA modification; tRNA-queuosine biosynthesis.</text>
</comment>
<comment type="subunit">
    <text evidence="1">Homodimer.</text>
</comment>
<comment type="subcellular location">
    <subcellularLocation>
        <location evidence="1">Cytoplasm</location>
    </subcellularLocation>
</comment>
<comment type="similarity">
    <text evidence="1">Belongs to the GTP cyclohydrolase I family. QueF type 2 subfamily.</text>
</comment>